<sequence length="267" mass="28408">MASSEETPRSLAGKVALVTGAGRGIGKGIAVELAKRGASVVVNYNSAEKPAQEVVDEIAKTGSRAVAIKADITKVPEVSRLFQEALQHFGHLDIVVSNSGTEVFKPEEEVTEEDYDRVFNLNTRAQFFIAQHAYVHLRNGGRIVLMSSVAANMSGIPNHALYAGSKAAVEGFTRSFAVDAGHRKITVNAIAPGGVKTDMYDANAWHYVPNGKPGMPMEEIDKGLAAFCPLGRVAVPQDIGRVVAFLAHPDSEWVNGQVILLTGGSVT</sequence>
<feature type="chain" id="PRO_0000445816" description="Hydroxynaphthalene reductase-like protein Arp2">
    <location>
        <begin position="1"/>
        <end position="267"/>
    </location>
</feature>
<feature type="active site" description="Proton donor" evidence="2">
    <location>
        <position position="147"/>
    </location>
</feature>
<feature type="active site" description="Proton donor" evidence="2">
    <location>
        <position position="148"/>
    </location>
</feature>
<feature type="active site" description="Proton acceptor" evidence="3">
    <location>
        <position position="162"/>
    </location>
</feature>
<feature type="active site" description="Lowers pKa of active site Tyr" evidence="2">
    <location>
        <position position="166"/>
    </location>
</feature>
<feature type="binding site" evidence="1">
    <location>
        <position position="25"/>
    </location>
    <ligand>
        <name>NADP(+)</name>
        <dbReference type="ChEBI" id="CHEBI:58349"/>
    </ligand>
</feature>
<feature type="binding site" evidence="1">
    <location>
        <position position="45"/>
    </location>
    <ligand>
        <name>NADP(+)</name>
        <dbReference type="ChEBI" id="CHEBI:58349"/>
    </ligand>
</feature>
<feature type="binding site" evidence="1">
    <location>
        <position position="71"/>
    </location>
    <ligand>
        <name>NADP(+)</name>
        <dbReference type="ChEBI" id="CHEBI:58349"/>
    </ligand>
</feature>
<feature type="binding site" evidence="2">
    <location>
        <position position="98"/>
    </location>
    <ligand>
        <name>NADP(+)</name>
        <dbReference type="ChEBI" id="CHEBI:58349"/>
    </ligand>
</feature>
<feature type="binding site" evidence="2">
    <location>
        <position position="162"/>
    </location>
    <ligand>
        <name>NADP(+)</name>
        <dbReference type="ChEBI" id="CHEBI:58349"/>
    </ligand>
</feature>
<feature type="binding site" evidence="2">
    <location>
        <position position="166"/>
    </location>
    <ligand>
        <name>NADP(+)</name>
        <dbReference type="ChEBI" id="CHEBI:58349"/>
    </ligand>
</feature>
<feature type="binding site" evidence="2">
    <location>
        <position position="195"/>
    </location>
    <ligand>
        <name>NADP(+)</name>
        <dbReference type="ChEBI" id="CHEBI:58349"/>
    </ligand>
</feature>
<feature type="binding site" evidence="1">
    <location>
        <position position="197"/>
    </location>
    <ligand>
        <name>NADP(+)</name>
        <dbReference type="ChEBI" id="CHEBI:58349"/>
    </ligand>
</feature>
<proteinExistence type="inferred from homology"/>
<accession>A0A0B4HVU2</accession>
<comment type="function">
    <text evidence="4">Hydroxynaphthalene reductase-like protein; part of the Pks2 gene cluster that mediates the formation of infectious structures (appressoria), enabling these fungi to kill insects faster (PubMed:29958281). The product of the Pks2 gene cluster is different from the one of Pks1 and has still not been identified (PubMed:29958281).</text>
</comment>
<comment type="similarity">
    <text evidence="6">Belongs to the short-chain dehydrogenases/reductases (SDR) family.</text>
</comment>
<organism>
    <name type="scientific">Metarhizium majus (strain ARSEF 297)</name>
    <dbReference type="NCBI Taxonomy" id="1276143"/>
    <lineage>
        <taxon>Eukaryota</taxon>
        <taxon>Fungi</taxon>
        <taxon>Dikarya</taxon>
        <taxon>Ascomycota</taxon>
        <taxon>Pezizomycotina</taxon>
        <taxon>Sordariomycetes</taxon>
        <taxon>Hypocreomycetidae</taxon>
        <taxon>Hypocreales</taxon>
        <taxon>Clavicipitaceae</taxon>
        <taxon>Metarhizium</taxon>
        <taxon>Metarhizium majus</taxon>
    </lineage>
</organism>
<evidence type="ECO:0000250" key="1">
    <source>
        <dbReference type="UniProtKB" id="L0E2Z4"/>
    </source>
</evidence>
<evidence type="ECO:0000250" key="2">
    <source>
        <dbReference type="UniProtKB" id="O93868"/>
    </source>
</evidence>
<evidence type="ECO:0000255" key="3">
    <source>
        <dbReference type="PROSITE-ProRule" id="PRU10001"/>
    </source>
</evidence>
<evidence type="ECO:0000269" key="4">
    <source>
    </source>
</evidence>
<evidence type="ECO:0000303" key="5">
    <source>
    </source>
</evidence>
<evidence type="ECO:0000305" key="6"/>
<evidence type="ECO:0000305" key="7">
    <source>
    </source>
</evidence>
<protein>
    <recommendedName>
        <fullName evidence="5">Hydroxynaphthalene reductase-like protein Arp2</fullName>
        <ecNumber evidence="7">1.1.-.-</ecNumber>
    </recommendedName>
</protein>
<name>ARP2_METMF</name>
<keyword id="KW-0521">NADP</keyword>
<keyword id="KW-0560">Oxidoreductase</keyword>
<gene>
    <name evidence="5" type="primary">Arp2</name>
    <name type="ORF">MAJ_07523</name>
</gene>
<dbReference type="EC" id="1.1.-.-" evidence="7"/>
<dbReference type="EMBL" id="AZNE01000049">
    <property type="protein sequence ID" value="KID96467.1"/>
    <property type="molecule type" value="Genomic_DNA"/>
</dbReference>
<dbReference type="RefSeq" id="XP_014575461.1">
    <property type="nucleotide sequence ID" value="XM_014719975.1"/>
</dbReference>
<dbReference type="SMR" id="A0A0B4HVU2"/>
<dbReference type="HOGENOM" id="CLU_010194_1_3_1"/>
<dbReference type="OrthoDB" id="47007at2759"/>
<dbReference type="GO" id="GO:0016491">
    <property type="term" value="F:oxidoreductase activity"/>
    <property type="evidence" value="ECO:0007669"/>
    <property type="project" value="UniProtKB-KW"/>
</dbReference>
<dbReference type="FunFam" id="3.40.50.720:FF:000084">
    <property type="entry name" value="Short-chain dehydrogenase reductase"/>
    <property type="match status" value="1"/>
</dbReference>
<dbReference type="Gene3D" id="3.40.50.720">
    <property type="entry name" value="NAD(P)-binding Rossmann-like Domain"/>
    <property type="match status" value="1"/>
</dbReference>
<dbReference type="InterPro" id="IPR036291">
    <property type="entry name" value="NAD(P)-bd_dom_sf"/>
</dbReference>
<dbReference type="InterPro" id="IPR020904">
    <property type="entry name" value="Sc_DH/Rdtase_CS"/>
</dbReference>
<dbReference type="InterPro" id="IPR002347">
    <property type="entry name" value="SDR_fam"/>
</dbReference>
<dbReference type="PANTHER" id="PTHR43639">
    <property type="entry name" value="OXIDOREDUCTASE, SHORT-CHAIN DEHYDROGENASE/REDUCTASE FAMILY (AFU_ORTHOLOGUE AFUA_5G02870)"/>
    <property type="match status" value="1"/>
</dbReference>
<dbReference type="PANTHER" id="PTHR43639:SF1">
    <property type="entry name" value="SHORT-CHAIN DEHYDROGENASE_REDUCTASE FAMILY PROTEIN"/>
    <property type="match status" value="1"/>
</dbReference>
<dbReference type="Pfam" id="PF13561">
    <property type="entry name" value="adh_short_C2"/>
    <property type="match status" value="1"/>
</dbReference>
<dbReference type="PRINTS" id="PR00081">
    <property type="entry name" value="GDHRDH"/>
</dbReference>
<dbReference type="PRINTS" id="PR00080">
    <property type="entry name" value="SDRFAMILY"/>
</dbReference>
<dbReference type="SMART" id="SM00822">
    <property type="entry name" value="PKS_KR"/>
    <property type="match status" value="1"/>
</dbReference>
<dbReference type="SUPFAM" id="SSF51735">
    <property type="entry name" value="NAD(P)-binding Rossmann-fold domains"/>
    <property type="match status" value="1"/>
</dbReference>
<dbReference type="PROSITE" id="PS00061">
    <property type="entry name" value="ADH_SHORT"/>
    <property type="match status" value="1"/>
</dbReference>
<reference key="1">
    <citation type="journal article" date="2014" name="Proc. Natl. Acad. Sci. U.S.A.">
        <title>Trajectory and genomic determinants of fungal-pathogen speciation and host adaptation.</title>
        <authorList>
            <person name="Hu X."/>
            <person name="Xiao G."/>
            <person name="Zheng P."/>
            <person name="Shang Y."/>
            <person name="Su Y."/>
            <person name="Zhang X."/>
            <person name="Liu X."/>
            <person name="Zhan S."/>
            <person name="St Leger R.J."/>
            <person name="Wang C."/>
        </authorList>
    </citation>
    <scope>NUCLEOTIDE SEQUENCE [LARGE SCALE GENOMIC DNA]</scope>
    <source>
        <strain>ARSEF 297</strain>
    </source>
</reference>
<reference key="2">
    <citation type="journal article" date="2018" name="PLoS Genet.">
        <title>Duplication of a Pks gene cluster and subsequent functional diversification facilitate environmental adaptation in Metarhizium species.</title>
        <authorList>
            <person name="Zeng G."/>
            <person name="Zhang P."/>
            <person name="Zhang Q."/>
            <person name="Zhao H."/>
            <person name="Li Z."/>
            <person name="Zhang X."/>
            <person name="Wang C."/>
            <person name="Yin W.B."/>
            <person name="Fang W."/>
        </authorList>
    </citation>
    <scope>IDENTIFICATION</scope>
    <scope>FUNCTION</scope>
</reference>